<evidence type="ECO:0000256" key="1">
    <source>
        <dbReference type="SAM" id="MobiDB-lite"/>
    </source>
</evidence>
<evidence type="ECO:0000305" key="2"/>
<dbReference type="EMBL" id="U00096">
    <property type="protein sequence ID" value="AAC74620.1"/>
    <property type="molecule type" value="Genomic_DNA"/>
</dbReference>
<dbReference type="EMBL" id="AP009048">
    <property type="protein sequence ID" value="BAA15251.1"/>
    <property type="molecule type" value="Genomic_DNA"/>
</dbReference>
<dbReference type="PIR" id="F64909">
    <property type="entry name" value="F64909"/>
</dbReference>
<dbReference type="RefSeq" id="NP_416065.1">
    <property type="nucleotide sequence ID" value="NC_000913.3"/>
</dbReference>
<dbReference type="RefSeq" id="WP_001027733.1">
    <property type="nucleotide sequence ID" value="NZ_LN832404.1"/>
</dbReference>
<dbReference type="SMR" id="P77515"/>
<dbReference type="BioGRID" id="4260773">
    <property type="interactions" value="26"/>
</dbReference>
<dbReference type="BioGRID" id="850458">
    <property type="interactions" value="1"/>
</dbReference>
<dbReference type="DIP" id="DIP-10931N"/>
<dbReference type="FunCoup" id="P77515">
    <property type="interactions" value="298"/>
</dbReference>
<dbReference type="IntAct" id="P77515">
    <property type="interactions" value="12"/>
</dbReference>
<dbReference type="STRING" id="511145.b1547"/>
<dbReference type="PaxDb" id="511145-b1547"/>
<dbReference type="EnsemblBacteria" id="AAC74620">
    <property type="protein sequence ID" value="AAC74620"/>
    <property type="gene ID" value="b1547"/>
</dbReference>
<dbReference type="GeneID" id="946098"/>
<dbReference type="KEGG" id="ecj:JW1540"/>
<dbReference type="KEGG" id="eco:b1547"/>
<dbReference type="KEGG" id="ecoc:C3026_08930"/>
<dbReference type="PATRIC" id="fig|1411691.4.peg.718"/>
<dbReference type="EchoBASE" id="EB3587"/>
<dbReference type="eggNOG" id="COG5301">
    <property type="taxonomic scope" value="Bacteria"/>
</dbReference>
<dbReference type="HOGENOM" id="CLU_008928_10_0_6"/>
<dbReference type="InParanoid" id="P77515"/>
<dbReference type="OMA" id="DMGWTIK"/>
<dbReference type="OrthoDB" id="9810174at2"/>
<dbReference type="PhylomeDB" id="P77515"/>
<dbReference type="BioCyc" id="EcoCyc:G6821-MONOMER"/>
<dbReference type="PRO" id="PR:P77515"/>
<dbReference type="Proteomes" id="UP000000625">
    <property type="component" value="Chromosome"/>
</dbReference>
<dbReference type="GO" id="GO:0005198">
    <property type="term" value="F:structural molecule activity"/>
    <property type="evidence" value="ECO:0007669"/>
    <property type="project" value="InterPro"/>
</dbReference>
<dbReference type="Gene3D" id="3.90.1340.10">
    <property type="entry name" value="Phage tail collar domain"/>
    <property type="match status" value="1"/>
</dbReference>
<dbReference type="InterPro" id="IPR005003">
    <property type="entry name" value="Phage_lambda_Stf-r1"/>
</dbReference>
<dbReference type="InterPro" id="IPR011083">
    <property type="entry name" value="Phage_tail_collar_dom"/>
</dbReference>
<dbReference type="InterPro" id="IPR037053">
    <property type="entry name" value="Phage_tail_collar_dom_sf"/>
</dbReference>
<dbReference type="InterPro" id="IPR051934">
    <property type="entry name" value="Phage_Tail_Fiber_Structural"/>
</dbReference>
<dbReference type="PANTHER" id="PTHR35191">
    <property type="entry name" value="PROPHAGE SIDE TAIL FIBER PROTEIN HOMOLOG STFQ-RELATED"/>
    <property type="match status" value="1"/>
</dbReference>
<dbReference type="PANTHER" id="PTHR35191:SF1">
    <property type="entry name" value="PROPHAGE SIDE TAIL FIBER PROTEIN HOMOLOG STFQ-RELATED"/>
    <property type="match status" value="1"/>
</dbReference>
<dbReference type="Pfam" id="PF07484">
    <property type="entry name" value="Collar"/>
    <property type="match status" value="1"/>
</dbReference>
<dbReference type="Pfam" id="PF03335">
    <property type="entry name" value="Phage_fiber"/>
    <property type="match status" value="5"/>
</dbReference>
<dbReference type="SUPFAM" id="SSF88874">
    <property type="entry name" value="Receptor-binding domain of short tail fibre protein gp12"/>
    <property type="match status" value="2"/>
</dbReference>
<accession>P77515</accession>
<reference key="1">
    <citation type="journal article" date="1996" name="DNA Res.">
        <title>A 570-kb DNA sequence of the Escherichia coli K-12 genome corresponding to the 28.0-40.1 min region on the linkage map.</title>
        <authorList>
            <person name="Aiba H."/>
            <person name="Baba T."/>
            <person name="Fujita K."/>
            <person name="Hayashi K."/>
            <person name="Inada T."/>
            <person name="Isono K."/>
            <person name="Itoh T."/>
            <person name="Kasai H."/>
            <person name="Kashimoto K."/>
            <person name="Kimura S."/>
            <person name="Kitakawa M."/>
            <person name="Kitagawa M."/>
            <person name="Makino K."/>
            <person name="Miki T."/>
            <person name="Mizobuchi K."/>
            <person name="Mori H."/>
            <person name="Mori T."/>
            <person name="Motomura K."/>
            <person name="Nakade S."/>
            <person name="Nakamura Y."/>
            <person name="Nashimoto H."/>
            <person name="Nishio Y."/>
            <person name="Oshima T."/>
            <person name="Saito N."/>
            <person name="Sampei G."/>
            <person name="Seki Y."/>
            <person name="Sivasundaram S."/>
            <person name="Tagami H."/>
            <person name="Takeda J."/>
            <person name="Takemoto K."/>
            <person name="Takeuchi Y."/>
            <person name="Wada C."/>
            <person name="Yamamoto Y."/>
            <person name="Horiuchi T."/>
        </authorList>
    </citation>
    <scope>NUCLEOTIDE SEQUENCE [LARGE SCALE GENOMIC DNA]</scope>
    <source>
        <strain>K12 / W3110 / ATCC 27325 / DSM 5911</strain>
    </source>
</reference>
<reference key="2">
    <citation type="journal article" date="1997" name="Science">
        <title>The complete genome sequence of Escherichia coli K-12.</title>
        <authorList>
            <person name="Blattner F.R."/>
            <person name="Plunkett G. III"/>
            <person name="Bloch C.A."/>
            <person name="Perna N.T."/>
            <person name="Burland V."/>
            <person name="Riley M."/>
            <person name="Collado-Vides J."/>
            <person name="Glasner J.D."/>
            <person name="Rode C.K."/>
            <person name="Mayhew G.F."/>
            <person name="Gregor J."/>
            <person name="Davis N.W."/>
            <person name="Kirkpatrick H.A."/>
            <person name="Goeden M.A."/>
            <person name="Rose D.J."/>
            <person name="Mau B."/>
            <person name="Shao Y."/>
        </authorList>
    </citation>
    <scope>NUCLEOTIDE SEQUENCE [LARGE SCALE GENOMIC DNA]</scope>
    <source>
        <strain>K12 / MG1655 / ATCC 47076</strain>
    </source>
</reference>
<reference key="3">
    <citation type="journal article" date="2006" name="Mol. Syst. Biol.">
        <title>Highly accurate genome sequences of Escherichia coli K-12 strains MG1655 and W3110.</title>
        <authorList>
            <person name="Hayashi K."/>
            <person name="Morooka N."/>
            <person name="Yamamoto Y."/>
            <person name="Fujita K."/>
            <person name="Isono K."/>
            <person name="Choi S."/>
            <person name="Ohtsubo E."/>
            <person name="Baba T."/>
            <person name="Wanner B.L."/>
            <person name="Mori H."/>
            <person name="Horiuchi T."/>
        </authorList>
    </citation>
    <scope>NUCLEOTIDE SEQUENCE [LARGE SCALE GENOMIC DNA]</scope>
    <source>
        <strain>K12 / W3110 / ATCC 27325 / DSM 5911</strain>
    </source>
</reference>
<protein>
    <recommendedName>
        <fullName evidence="2">Prophage side tail fiber protein homolog StfQ</fullName>
    </recommendedName>
    <alternativeName>
        <fullName>Side tail fiber protein homolog from lambdoid prophage Qin</fullName>
    </alternativeName>
</protein>
<sequence length="320" mass="32902">MNITALTDNTQGAAGLELYEVYNNGYPTAYGNIIHLKGMTAVGEGELLIGWSGTSGAHAPAFIRSRRDTTDANWSPWAQLYTSAHPPAEFYPVGAPIPWPSDTVPSGYALMQGQTFDKSAYPKLAVAYPSGVIPDMRGWTIKGKPASGRAVLSQEQDGIKSHTHSASASSTDLGTETTSSFDYGTKSTNNTGAHTHSISGTANSAGAHQHKSSGAFGGTNTSIFPNGYTAISNLSAGIMSTTSGSGQTRNAGKTSSDGAHTHSLSGTAASAGAHAHTVGIGAHTHSVAIGSHGHTITVNAAGNAENTVKNIAFNYIVRLA</sequence>
<gene>
    <name type="primary">stfQ</name>
    <name type="synonym">ydfN</name>
    <name type="ordered locus">b1547</name>
    <name type="ordered locus">JW1540</name>
</gene>
<feature type="chain" id="PRO_0000077742" description="Prophage side tail fiber protein homolog StfQ">
    <location>
        <begin position="1"/>
        <end position="320"/>
    </location>
</feature>
<feature type="region of interest" description="Disordered" evidence="1">
    <location>
        <begin position="147"/>
        <end position="213"/>
    </location>
</feature>
<feature type="region of interest" description="Disordered" evidence="1">
    <location>
        <begin position="241"/>
        <end position="270"/>
    </location>
</feature>
<feature type="compositionally biased region" description="Polar residues" evidence="1">
    <location>
        <begin position="172"/>
        <end position="206"/>
    </location>
</feature>
<feature type="compositionally biased region" description="Polar residues" evidence="1">
    <location>
        <begin position="241"/>
        <end position="258"/>
    </location>
</feature>
<feature type="compositionally biased region" description="Low complexity" evidence="1">
    <location>
        <begin position="261"/>
        <end position="270"/>
    </location>
</feature>
<comment type="similarity">
    <text evidence="2">Belongs to the tail fiber family.</text>
</comment>
<proteinExistence type="inferred from homology"/>
<keyword id="KW-1185">Reference proteome</keyword>
<keyword id="KW-0677">Repeat</keyword>
<name>STFQ_ECOLI</name>
<organism>
    <name type="scientific">Escherichia coli (strain K12)</name>
    <dbReference type="NCBI Taxonomy" id="83333"/>
    <lineage>
        <taxon>Bacteria</taxon>
        <taxon>Pseudomonadati</taxon>
        <taxon>Pseudomonadota</taxon>
        <taxon>Gammaproteobacteria</taxon>
        <taxon>Enterobacterales</taxon>
        <taxon>Enterobacteriaceae</taxon>
        <taxon>Escherichia</taxon>
    </lineage>
</organism>